<reference key="1">
    <citation type="journal article" date="2007" name="Proc. Natl. Acad. Sci. U.S.A.">
        <title>Deep-sea vent epsilon-proteobacterial genomes provide insights into emergence of pathogens.</title>
        <authorList>
            <person name="Nakagawa S."/>
            <person name="Takaki Y."/>
            <person name="Shimamura S."/>
            <person name="Reysenbach A.-L."/>
            <person name="Takai K."/>
            <person name="Horikoshi K."/>
        </authorList>
    </citation>
    <scope>NUCLEOTIDE SEQUENCE [LARGE SCALE GENOMIC DNA]</scope>
    <source>
        <strain>NBC37-1</strain>
    </source>
</reference>
<comment type="similarity">
    <text evidence="1">Belongs to the UPF0102 family.</text>
</comment>
<dbReference type="EMBL" id="AP009179">
    <property type="protein sequence ID" value="BAF71191.1"/>
    <property type="molecule type" value="Genomic_DNA"/>
</dbReference>
<dbReference type="RefSeq" id="WP_011979924.1">
    <property type="nucleotide sequence ID" value="NC_009663.1"/>
</dbReference>
<dbReference type="SMR" id="A6Q6T2"/>
<dbReference type="STRING" id="387093.SUN_0231"/>
<dbReference type="KEGG" id="sun:SUN_0231"/>
<dbReference type="eggNOG" id="COG0792">
    <property type="taxonomic scope" value="Bacteria"/>
</dbReference>
<dbReference type="HOGENOM" id="CLU_115353_3_2_7"/>
<dbReference type="OrthoDB" id="9794876at2"/>
<dbReference type="Proteomes" id="UP000006378">
    <property type="component" value="Chromosome"/>
</dbReference>
<dbReference type="GO" id="GO:0003676">
    <property type="term" value="F:nucleic acid binding"/>
    <property type="evidence" value="ECO:0007669"/>
    <property type="project" value="InterPro"/>
</dbReference>
<dbReference type="Gene3D" id="3.40.1350.10">
    <property type="match status" value="1"/>
</dbReference>
<dbReference type="HAMAP" id="MF_00048">
    <property type="entry name" value="UPF0102"/>
    <property type="match status" value="1"/>
</dbReference>
<dbReference type="InterPro" id="IPR011335">
    <property type="entry name" value="Restrct_endonuc-II-like"/>
</dbReference>
<dbReference type="InterPro" id="IPR011856">
    <property type="entry name" value="tRNA_endonuc-like_dom_sf"/>
</dbReference>
<dbReference type="InterPro" id="IPR003509">
    <property type="entry name" value="UPF0102_YraN-like"/>
</dbReference>
<dbReference type="NCBIfam" id="NF009152">
    <property type="entry name" value="PRK12497.2-4"/>
    <property type="match status" value="1"/>
</dbReference>
<dbReference type="PANTHER" id="PTHR34039">
    <property type="entry name" value="UPF0102 PROTEIN YRAN"/>
    <property type="match status" value="1"/>
</dbReference>
<dbReference type="PANTHER" id="PTHR34039:SF1">
    <property type="entry name" value="UPF0102 PROTEIN YRAN"/>
    <property type="match status" value="1"/>
</dbReference>
<dbReference type="Pfam" id="PF02021">
    <property type="entry name" value="UPF0102"/>
    <property type="match status" value="1"/>
</dbReference>
<dbReference type="SUPFAM" id="SSF52980">
    <property type="entry name" value="Restriction endonuclease-like"/>
    <property type="match status" value="1"/>
</dbReference>
<gene>
    <name type="ordered locus">SUN_0231</name>
</gene>
<accession>A6Q6T2</accession>
<organism>
    <name type="scientific">Sulfurovum sp. (strain NBC37-1)</name>
    <dbReference type="NCBI Taxonomy" id="387093"/>
    <lineage>
        <taxon>Bacteria</taxon>
        <taxon>Pseudomonadati</taxon>
        <taxon>Campylobacterota</taxon>
        <taxon>Epsilonproteobacteria</taxon>
        <taxon>Campylobacterales</taxon>
        <taxon>Sulfurovaceae</taxon>
        <taxon>Sulfurovum</taxon>
    </lineage>
</organism>
<proteinExistence type="inferred from homology"/>
<sequence>MRELPKIFGDKSEDLATLFLEQEGFIVIERNYFARKLGEIDIIAQKDEVLHFIEVKSGKADFDPVYNVTPDKLRKVINSAHYYMKSKKIDVSFSVDALIIRGDEVEFIENVTL</sequence>
<name>Y231_SULNB</name>
<feature type="chain" id="PRO_0000336270" description="UPF0102 protein SUN_0231">
    <location>
        <begin position="1"/>
        <end position="113"/>
    </location>
</feature>
<evidence type="ECO:0000255" key="1">
    <source>
        <dbReference type="HAMAP-Rule" id="MF_00048"/>
    </source>
</evidence>
<protein>
    <recommendedName>
        <fullName evidence="1">UPF0102 protein SUN_0231</fullName>
    </recommendedName>
</protein>